<dbReference type="EMBL" id="AE003852">
    <property type="protein sequence ID" value="AAF95719.1"/>
    <property type="molecule type" value="Genomic_DNA"/>
</dbReference>
<dbReference type="PIR" id="D82057">
    <property type="entry name" value="D82057"/>
</dbReference>
<dbReference type="RefSeq" id="NP_232206.1">
    <property type="nucleotide sequence ID" value="NC_002505.1"/>
</dbReference>
<dbReference type="RefSeq" id="WP_000201159.1">
    <property type="nucleotide sequence ID" value="NZ_LT906614.1"/>
</dbReference>
<dbReference type="SMR" id="Q9KP02"/>
<dbReference type="STRING" id="243277.VC_2578"/>
<dbReference type="DNASU" id="2615595"/>
<dbReference type="EnsemblBacteria" id="AAF95719">
    <property type="protein sequence ID" value="AAF95719"/>
    <property type="gene ID" value="VC_2578"/>
</dbReference>
<dbReference type="GeneID" id="96872481"/>
<dbReference type="KEGG" id="vch:VC_2578"/>
<dbReference type="PATRIC" id="fig|243277.26.peg.2457"/>
<dbReference type="eggNOG" id="COG1841">
    <property type="taxonomic scope" value="Bacteria"/>
</dbReference>
<dbReference type="HOGENOM" id="CLU_131047_1_4_6"/>
<dbReference type="PRO" id="PR:Q9KP02"/>
<dbReference type="Proteomes" id="UP000000584">
    <property type="component" value="Chromosome 1"/>
</dbReference>
<dbReference type="GO" id="GO:0022625">
    <property type="term" value="C:cytosolic large ribosomal subunit"/>
    <property type="evidence" value="ECO:0000318"/>
    <property type="project" value="GO_Central"/>
</dbReference>
<dbReference type="GO" id="GO:0003735">
    <property type="term" value="F:structural constituent of ribosome"/>
    <property type="evidence" value="ECO:0007669"/>
    <property type="project" value="InterPro"/>
</dbReference>
<dbReference type="GO" id="GO:0006412">
    <property type="term" value="P:translation"/>
    <property type="evidence" value="ECO:0007669"/>
    <property type="project" value="UniProtKB-UniRule"/>
</dbReference>
<dbReference type="CDD" id="cd01658">
    <property type="entry name" value="Ribosomal_L30"/>
    <property type="match status" value="1"/>
</dbReference>
<dbReference type="FunFam" id="3.30.1390.20:FF:000001">
    <property type="entry name" value="50S ribosomal protein L30"/>
    <property type="match status" value="1"/>
</dbReference>
<dbReference type="Gene3D" id="3.30.1390.20">
    <property type="entry name" value="Ribosomal protein L30, ferredoxin-like fold domain"/>
    <property type="match status" value="1"/>
</dbReference>
<dbReference type="HAMAP" id="MF_01371_B">
    <property type="entry name" value="Ribosomal_uL30_B"/>
    <property type="match status" value="1"/>
</dbReference>
<dbReference type="InterPro" id="IPR036919">
    <property type="entry name" value="Ribo_uL30_ferredoxin-like_sf"/>
</dbReference>
<dbReference type="InterPro" id="IPR005996">
    <property type="entry name" value="Ribosomal_uL30_bac-type"/>
</dbReference>
<dbReference type="InterPro" id="IPR018038">
    <property type="entry name" value="Ribosomal_uL30_CS"/>
</dbReference>
<dbReference type="InterPro" id="IPR016082">
    <property type="entry name" value="Ribosomal_uL30_ferredoxin-like"/>
</dbReference>
<dbReference type="NCBIfam" id="TIGR01308">
    <property type="entry name" value="rpmD_bact"/>
    <property type="match status" value="1"/>
</dbReference>
<dbReference type="PANTHER" id="PTHR15892:SF2">
    <property type="entry name" value="LARGE RIBOSOMAL SUBUNIT PROTEIN UL30M"/>
    <property type="match status" value="1"/>
</dbReference>
<dbReference type="PANTHER" id="PTHR15892">
    <property type="entry name" value="MITOCHONDRIAL RIBOSOMAL PROTEIN L30"/>
    <property type="match status" value="1"/>
</dbReference>
<dbReference type="Pfam" id="PF00327">
    <property type="entry name" value="Ribosomal_L30"/>
    <property type="match status" value="1"/>
</dbReference>
<dbReference type="PIRSF" id="PIRSF002211">
    <property type="entry name" value="Ribosomal_L30_bac-type"/>
    <property type="match status" value="1"/>
</dbReference>
<dbReference type="SUPFAM" id="SSF55129">
    <property type="entry name" value="Ribosomal protein L30p/L7e"/>
    <property type="match status" value="1"/>
</dbReference>
<dbReference type="PROSITE" id="PS00634">
    <property type="entry name" value="RIBOSOMAL_L30"/>
    <property type="match status" value="1"/>
</dbReference>
<name>RL30_VIBCH</name>
<evidence type="ECO:0000255" key="1">
    <source>
        <dbReference type="HAMAP-Rule" id="MF_01371"/>
    </source>
</evidence>
<evidence type="ECO:0000305" key="2"/>
<protein>
    <recommendedName>
        <fullName evidence="1">Large ribosomal subunit protein uL30</fullName>
    </recommendedName>
    <alternativeName>
        <fullName evidence="2">50S ribosomal protein L30</fullName>
    </alternativeName>
</protein>
<feature type="chain" id="PRO_0000273884" description="Large ribosomal subunit protein uL30">
    <location>
        <begin position="1"/>
        <end position="58"/>
    </location>
</feature>
<keyword id="KW-1185">Reference proteome</keyword>
<keyword id="KW-0687">Ribonucleoprotein</keyword>
<keyword id="KW-0689">Ribosomal protein</keyword>
<comment type="subunit">
    <text evidence="1">Part of the 50S ribosomal subunit.</text>
</comment>
<comment type="similarity">
    <text evidence="1">Belongs to the universal ribosomal protein uL30 family.</text>
</comment>
<accession>Q9KP02</accession>
<proteinExistence type="inferred from homology"/>
<sequence>MATIKVTQTKSSIGRLPKHKATLRGLGLRKINHTVELEDTPCVRGMINKVYYMVKVEE</sequence>
<reference key="1">
    <citation type="journal article" date="2000" name="Nature">
        <title>DNA sequence of both chromosomes of the cholera pathogen Vibrio cholerae.</title>
        <authorList>
            <person name="Heidelberg J.F."/>
            <person name="Eisen J.A."/>
            <person name="Nelson W.C."/>
            <person name="Clayton R.A."/>
            <person name="Gwinn M.L."/>
            <person name="Dodson R.J."/>
            <person name="Haft D.H."/>
            <person name="Hickey E.K."/>
            <person name="Peterson J.D."/>
            <person name="Umayam L.A."/>
            <person name="Gill S.R."/>
            <person name="Nelson K.E."/>
            <person name="Read T.D."/>
            <person name="Tettelin H."/>
            <person name="Richardson D.L."/>
            <person name="Ermolaeva M.D."/>
            <person name="Vamathevan J.J."/>
            <person name="Bass S."/>
            <person name="Qin H."/>
            <person name="Dragoi I."/>
            <person name="Sellers P."/>
            <person name="McDonald L.A."/>
            <person name="Utterback T.R."/>
            <person name="Fleischmann R.D."/>
            <person name="Nierman W.C."/>
            <person name="White O."/>
            <person name="Salzberg S.L."/>
            <person name="Smith H.O."/>
            <person name="Colwell R.R."/>
            <person name="Mekalanos J.J."/>
            <person name="Venter J.C."/>
            <person name="Fraser C.M."/>
        </authorList>
    </citation>
    <scope>NUCLEOTIDE SEQUENCE [LARGE SCALE GENOMIC DNA]</scope>
    <source>
        <strain>ATCC 39315 / El Tor Inaba N16961</strain>
    </source>
</reference>
<organism>
    <name type="scientific">Vibrio cholerae serotype O1 (strain ATCC 39315 / El Tor Inaba N16961)</name>
    <dbReference type="NCBI Taxonomy" id="243277"/>
    <lineage>
        <taxon>Bacteria</taxon>
        <taxon>Pseudomonadati</taxon>
        <taxon>Pseudomonadota</taxon>
        <taxon>Gammaproteobacteria</taxon>
        <taxon>Vibrionales</taxon>
        <taxon>Vibrionaceae</taxon>
        <taxon>Vibrio</taxon>
    </lineage>
</organism>
<gene>
    <name evidence="1" type="primary">rpmD</name>
    <name type="ordered locus">VC_2578</name>
</gene>